<comment type="function">
    <text evidence="1">Catalyzes the reversible phosphorylation of UMP to UDP.</text>
</comment>
<comment type="catalytic activity">
    <reaction evidence="1">
        <text>UMP + ATP = UDP + ADP</text>
        <dbReference type="Rhea" id="RHEA:24400"/>
        <dbReference type="ChEBI" id="CHEBI:30616"/>
        <dbReference type="ChEBI" id="CHEBI:57865"/>
        <dbReference type="ChEBI" id="CHEBI:58223"/>
        <dbReference type="ChEBI" id="CHEBI:456216"/>
        <dbReference type="EC" id="2.7.4.22"/>
    </reaction>
</comment>
<comment type="activity regulation">
    <text evidence="1">Inhibited by UTP.</text>
</comment>
<comment type="pathway">
    <text evidence="1">Pyrimidine metabolism; CTP biosynthesis via de novo pathway; UDP from UMP (UMPK route): step 1/1.</text>
</comment>
<comment type="subunit">
    <text evidence="1">Homohexamer.</text>
</comment>
<comment type="subcellular location">
    <subcellularLocation>
        <location evidence="1">Cytoplasm</location>
    </subcellularLocation>
</comment>
<comment type="similarity">
    <text evidence="1">Belongs to the UMP kinase family.</text>
</comment>
<sequence>MRIIVSIGGSVLAPDLEAGRVEAHADAIDSLVADGHEVAAVVGGGDVARQYIDSARDLGATEYDLDALGIDVTRLNARLLVTALNSSAIPEPAESHEDARASMRRGEVAVMGGTVPGHTTDAVAAMLAEMVEADLLIYATSVPGVFSADPNEDPSAERFDRLEASKLVDVISSIETTAGSNAPVDLLAAKVIERSGLRAIVLDGTAPERIADAVDGDPVGTEVLPNE</sequence>
<keyword id="KW-0067">ATP-binding</keyword>
<keyword id="KW-0963">Cytoplasm</keyword>
<keyword id="KW-0418">Kinase</keyword>
<keyword id="KW-0547">Nucleotide-binding</keyword>
<keyword id="KW-0665">Pyrimidine biosynthesis</keyword>
<keyword id="KW-1185">Reference proteome</keyword>
<keyword id="KW-0808">Transferase</keyword>
<gene>
    <name evidence="1" type="primary">pyrH</name>
    <name type="ordered locus">NP_2272A</name>
</gene>
<proteinExistence type="inferred from homology"/>
<feature type="chain" id="PRO_1000053964" description="Uridylate kinase">
    <location>
        <begin position="1"/>
        <end position="227"/>
    </location>
</feature>
<feature type="binding site" evidence="1">
    <location>
        <begin position="9"/>
        <end position="10"/>
    </location>
    <ligand>
        <name>ATP</name>
        <dbReference type="ChEBI" id="CHEBI:30616"/>
    </ligand>
</feature>
<feature type="binding site" evidence="1">
    <location>
        <position position="44"/>
    </location>
    <ligand>
        <name>UMP</name>
        <dbReference type="ChEBI" id="CHEBI:57865"/>
    </ligand>
</feature>
<feature type="binding site" evidence="1">
    <location>
        <position position="45"/>
    </location>
    <ligand>
        <name>ATP</name>
        <dbReference type="ChEBI" id="CHEBI:30616"/>
    </ligand>
</feature>
<feature type="binding site" evidence="1">
    <location>
        <position position="49"/>
    </location>
    <ligand>
        <name>ATP</name>
        <dbReference type="ChEBI" id="CHEBI:30616"/>
    </ligand>
</feature>
<feature type="binding site" evidence="1">
    <location>
        <position position="66"/>
    </location>
    <ligand>
        <name>UMP</name>
        <dbReference type="ChEBI" id="CHEBI:57865"/>
    </ligand>
</feature>
<feature type="binding site" evidence="1">
    <location>
        <begin position="114"/>
        <end position="120"/>
    </location>
    <ligand>
        <name>UMP</name>
        <dbReference type="ChEBI" id="CHEBI:57865"/>
    </ligand>
</feature>
<feature type="binding site" evidence="1">
    <location>
        <position position="140"/>
    </location>
    <ligand>
        <name>ATP</name>
        <dbReference type="ChEBI" id="CHEBI:30616"/>
    </ligand>
</feature>
<feature type="binding site" evidence="1">
    <location>
        <position position="146"/>
    </location>
    <ligand>
        <name>ATP</name>
        <dbReference type="ChEBI" id="CHEBI:30616"/>
    </ligand>
</feature>
<feature type="binding site" evidence="1">
    <location>
        <position position="149"/>
    </location>
    <ligand>
        <name>ATP</name>
        <dbReference type="ChEBI" id="CHEBI:30616"/>
    </ligand>
</feature>
<dbReference type="EC" id="2.7.4.22" evidence="1"/>
<dbReference type="EMBL" id="CR936257">
    <property type="protein sequence ID" value="CAI49227.1"/>
    <property type="molecule type" value="Genomic_DNA"/>
</dbReference>
<dbReference type="RefSeq" id="WP_011322854.1">
    <property type="nucleotide sequence ID" value="NC_007426.1"/>
</dbReference>
<dbReference type="SMR" id="Q3IRL6"/>
<dbReference type="STRING" id="348780.NP_2272A"/>
<dbReference type="EnsemblBacteria" id="CAI49227">
    <property type="protein sequence ID" value="CAI49227"/>
    <property type="gene ID" value="NP_2272A"/>
</dbReference>
<dbReference type="GeneID" id="3703087"/>
<dbReference type="KEGG" id="nph:NP_2272A"/>
<dbReference type="eggNOG" id="arCOG00858">
    <property type="taxonomic scope" value="Archaea"/>
</dbReference>
<dbReference type="HOGENOM" id="CLU_079546_0_0_2"/>
<dbReference type="OrthoDB" id="372251at2157"/>
<dbReference type="UniPathway" id="UPA00159">
    <property type="reaction ID" value="UER00275"/>
</dbReference>
<dbReference type="Proteomes" id="UP000002698">
    <property type="component" value="Chromosome"/>
</dbReference>
<dbReference type="GO" id="GO:0005737">
    <property type="term" value="C:cytoplasm"/>
    <property type="evidence" value="ECO:0007669"/>
    <property type="project" value="UniProtKB-SubCell"/>
</dbReference>
<dbReference type="GO" id="GO:0005524">
    <property type="term" value="F:ATP binding"/>
    <property type="evidence" value="ECO:0007669"/>
    <property type="project" value="UniProtKB-KW"/>
</dbReference>
<dbReference type="GO" id="GO:0033862">
    <property type="term" value="F:UMP kinase activity"/>
    <property type="evidence" value="ECO:0007669"/>
    <property type="project" value="UniProtKB-EC"/>
</dbReference>
<dbReference type="GO" id="GO:0044210">
    <property type="term" value="P:'de novo' CTP biosynthetic process"/>
    <property type="evidence" value="ECO:0007669"/>
    <property type="project" value="UniProtKB-UniRule"/>
</dbReference>
<dbReference type="GO" id="GO:0006225">
    <property type="term" value="P:UDP biosynthetic process"/>
    <property type="evidence" value="ECO:0007669"/>
    <property type="project" value="TreeGrafter"/>
</dbReference>
<dbReference type="CDD" id="cd04253">
    <property type="entry name" value="AAK_UMPK-PyrH-Pf"/>
    <property type="match status" value="1"/>
</dbReference>
<dbReference type="Gene3D" id="3.40.1160.10">
    <property type="entry name" value="Acetylglutamate kinase-like"/>
    <property type="match status" value="1"/>
</dbReference>
<dbReference type="HAMAP" id="MF_01220_A">
    <property type="entry name" value="PyrH_A"/>
    <property type="match status" value="1"/>
</dbReference>
<dbReference type="InterPro" id="IPR036393">
    <property type="entry name" value="AceGlu_kinase-like_sf"/>
</dbReference>
<dbReference type="InterPro" id="IPR001048">
    <property type="entry name" value="Asp/Glu/Uridylate_kinase"/>
</dbReference>
<dbReference type="InterPro" id="IPR011817">
    <property type="entry name" value="Uridylate_kinase"/>
</dbReference>
<dbReference type="InterPro" id="IPR011818">
    <property type="entry name" value="Uridylate_kinase_arch/spir"/>
</dbReference>
<dbReference type="NCBIfam" id="TIGR02076">
    <property type="entry name" value="pyrH_arch"/>
    <property type="match status" value="1"/>
</dbReference>
<dbReference type="PANTHER" id="PTHR42833">
    <property type="entry name" value="URIDYLATE KINASE"/>
    <property type="match status" value="1"/>
</dbReference>
<dbReference type="PANTHER" id="PTHR42833:SF4">
    <property type="entry name" value="URIDYLATE KINASE PUMPKIN, CHLOROPLASTIC"/>
    <property type="match status" value="1"/>
</dbReference>
<dbReference type="Pfam" id="PF00696">
    <property type="entry name" value="AA_kinase"/>
    <property type="match status" value="1"/>
</dbReference>
<dbReference type="PIRSF" id="PIRSF005650">
    <property type="entry name" value="Uridylate_kin"/>
    <property type="match status" value="1"/>
</dbReference>
<dbReference type="SUPFAM" id="SSF53633">
    <property type="entry name" value="Carbamate kinase-like"/>
    <property type="match status" value="1"/>
</dbReference>
<accession>Q3IRL6</accession>
<protein>
    <recommendedName>
        <fullName evidence="1">Uridylate kinase</fullName>
        <shortName evidence="1">UK</shortName>
        <ecNumber evidence="1">2.7.4.22</ecNumber>
    </recommendedName>
    <alternativeName>
        <fullName evidence="1">Uridine monophosphate kinase</fullName>
        <shortName evidence="1">UMP kinase</shortName>
        <shortName evidence="1">UMPK</shortName>
    </alternativeName>
</protein>
<organism>
    <name type="scientific">Natronomonas pharaonis (strain ATCC 35678 / DSM 2160 / CIP 103997 / JCM 8858 / NBRC 14720 / NCIMB 2260 / Gabara)</name>
    <name type="common">Halobacterium pharaonis</name>
    <dbReference type="NCBI Taxonomy" id="348780"/>
    <lineage>
        <taxon>Archaea</taxon>
        <taxon>Methanobacteriati</taxon>
        <taxon>Methanobacteriota</taxon>
        <taxon>Stenosarchaea group</taxon>
        <taxon>Halobacteria</taxon>
        <taxon>Halobacteriales</taxon>
        <taxon>Haloarculaceae</taxon>
        <taxon>Natronomonas</taxon>
    </lineage>
</organism>
<name>PYRH_NATPD</name>
<evidence type="ECO:0000255" key="1">
    <source>
        <dbReference type="HAMAP-Rule" id="MF_01220"/>
    </source>
</evidence>
<reference key="1">
    <citation type="journal article" date="2005" name="Genome Res.">
        <title>Living with two extremes: conclusions from the genome sequence of Natronomonas pharaonis.</title>
        <authorList>
            <person name="Falb M."/>
            <person name="Pfeiffer F."/>
            <person name="Palm P."/>
            <person name="Rodewald K."/>
            <person name="Hickmann V."/>
            <person name="Tittor J."/>
            <person name="Oesterhelt D."/>
        </authorList>
    </citation>
    <scope>NUCLEOTIDE SEQUENCE [LARGE SCALE GENOMIC DNA]</scope>
    <source>
        <strain>ATCC 35678 / DSM 2160 / CIP 103997 / JCM 8858 / NBRC 14720 / NCIMB 2260 / Gabara</strain>
    </source>
</reference>